<name>Y2246_YERPA</name>
<comment type="subcellular location">
    <subcellularLocation>
        <location evidence="1">Cell membrane</location>
        <topology evidence="1">Single-pass membrane protein</topology>
    </subcellularLocation>
</comment>
<comment type="similarity">
    <text evidence="1">Belongs to the UPF0370 family.</text>
</comment>
<dbReference type="EMBL" id="CP000308">
    <property type="protein sequence ID" value="ABG14211.1"/>
    <property type="molecule type" value="Genomic_DNA"/>
</dbReference>
<dbReference type="RefSeq" id="WP_002208551.1">
    <property type="nucleotide sequence ID" value="NZ_CP009906.1"/>
</dbReference>
<dbReference type="SMR" id="Q1C5R1"/>
<dbReference type="KEGG" id="ypa:YPA_2246"/>
<dbReference type="Proteomes" id="UP000001971">
    <property type="component" value="Chromosome"/>
</dbReference>
<dbReference type="GO" id="GO:0005886">
    <property type="term" value="C:plasma membrane"/>
    <property type="evidence" value="ECO:0007669"/>
    <property type="project" value="UniProtKB-SubCell"/>
</dbReference>
<dbReference type="HAMAP" id="MF_01566">
    <property type="entry name" value="UPF0370"/>
    <property type="match status" value="1"/>
</dbReference>
<dbReference type="InterPro" id="IPR020910">
    <property type="entry name" value="UPF0370"/>
</dbReference>
<dbReference type="NCBIfam" id="NF010185">
    <property type="entry name" value="PRK13664.1"/>
    <property type="match status" value="1"/>
</dbReference>
<dbReference type="Pfam" id="PF13980">
    <property type="entry name" value="UPF0370"/>
    <property type="match status" value="1"/>
</dbReference>
<keyword id="KW-1003">Cell membrane</keyword>
<keyword id="KW-0472">Membrane</keyword>
<keyword id="KW-0812">Transmembrane</keyword>
<keyword id="KW-1133">Transmembrane helix</keyword>
<sequence>MQWLADYWWIILILLVGMILNGIKELRRLDHKRFLDNKPELPPHRDNNAQWDDEDDWPDQNKKK</sequence>
<organism>
    <name type="scientific">Yersinia pestis bv. Antiqua (strain Antiqua)</name>
    <dbReference type="NCBI Taxonomy" id="360102"/>
    <lineage>
        <taxon>Bacteria</taxon>
        <taxon>Pseudomonadati</taxon>
        <taxon>Pseudomonadota</taxon>
        <taxon>Gammaproteobacteria</taxon>
        <taxon>Enterobacterales</taxon>
        <taxon>Yersiniaceae</taxon>
        <taxon>Yersinia</taxon>
    </lineage>
</organism>
<proteinExistence type="inferred from homology"/>
<feature type="chain" id="PRO_1000069089" description="UPF0370 protein YPA_2246">
    <location>
        <begin position="1"/>
        <end position="64"/>
    </location>
</feature>
<feature type="transmembrane region" description="Helical" evidence="1">
    <location>
        <begin position="3"/>
        <end position="23"/>
    </location>
</feature>
<feature type="region of interest" description="Disordered" evidence="2">
    <location>
        <begin position="36"/>
        <end position="64"/>
    </location>
</feature>
<feature type="compositionally biased region" description="Basic and acidic residues" evidence="2">
    <location>
        <begin position="36"/>
        <end position="47"/>
    </location>
</feature>
<accession>Q1C5R1</accession>
<gene>
    <name type="ordered locus">YPA_2246</name>
</gene>
<evidence type="ECO:0000255" key="1">
    <source>
        <dbReference type="HAMAP-Rule" id="MF_01566"/>
    </source>
</evidence>
<evidence type="ECO:0000256" key="2">
    <source>
        <dbReference type="SAM" id="MobiDB-lite"/>
    </source>
</evidence>
<reference key="1">
    <citation type="journal article" date="2006" name="J. Bacteriol.">
        <title>Complete genome sequence of Yersinia pestis strains Antiqua and Nepal516: evidence of gene reduction in an emerging pathogen.</title>
        <authorList>
            <person name="Chain P.S.G."/>
            <person name="Hu P."/>
            <person name="Malfatti S.A."/>
            <person name="Radnedge L."/>
            <person name="Larimer F."/>
            <person name="Vergez L.M."/>
            <person name="Worsham P."/>
            <person name="Chu M.C."/>
            <person name="Andersen G.L."/>
        </authorList>
    </citation>
    <scope>NUCLEOTIDE SEQUENCE [LARGE SCALE GENOMIC DNA]</scope>
    <source>
        <strain>Antiqua</strain>
    </source>
</reference>
<protein>
    <recommendedName>
        <fullName evidence="1">UPF0370 protein YPA_2246</fullName>
    </recommendedName>
</protein>